<evidence type="ECO:0000255" key="1">
    <source>
        <dbReference type="HAMAP-Rule" id="MF_01123"/>
    </source>
</evidence>
<dbReference type="EC" id="6.2.1.1" evidence="1"/>
<dbReference type="EMBL" id="CP000011">
    <property type="protein sequence ID" value="AAU45843.1"/>
    <property type="molecule type" value="Genomic_DNA"/>
</dbReference>
<dbReference type="RefSeq" id="YP_106348.1">
    <property type="nucleotide sequence ID" value="NC_006349.2"/>
</dbReference>
<dbReference type="SMR" id="Q62AD1"/>
<dbReference type="KEGG" id="bma:BMAA1794"/>
<dbReference type="PATRIC" id="fig|243160.12.peg.5392"/>
<dbReference type="eggNOG" id="COG0365">
    <property type="taxonomic scope" value="Bacteria"/>
</dbReference>
<dbReference type="HOGENOM" id="CLU_000022_3_6_4"/>
<dbReference type="Proteomes" id="UP000006693">
    <property type="component" value="Chromosome 2"/>
</dbReference>
<dbReference type="GO" id="GO:0005829">
    <property type="term" value="C:cytosol"/>
    <property type="evidence" value="ECO:0007669"/>
    <property type="project" value="TreeGrafter"/>
</dbReference>
<dbReference type="GO" id="GO:0003987">
    <property type="term" value="F:acetate-CoA ligase activity"/>
    <property type="evidence" value="ECO:0007669"/>
    <property type="project" value="UniProtKB-UniRule"/>
</dbReference>
<dbReference type="GO" id="GO:0016208">
    <property type="term" value="F:AMP binding"/>
    <property type="evidence" value="ECO:0007669"/>
    <property type="project" value="InterPro"/>
</dbReference>
<dbReference type="GO" id="GO:0005524">
    <property type="term" value="F:ATP binding"/>
    <property type="evidence" value="ECO:0007669"/>
    <property type="project" value="UniProtKB-KW"/>
</dbReference>
<dbReference type="GO" id="GO:0046872">
    <property type="term" value="F:metal ion binding"/>
    <property type="evidence" value="ECO:0007669"/>
    <property type="project" value="UniProtKB-KW"/>
</dbReference>
<dbReference type="GO" id="GO:0019427">
    <property type="term" value="P:acetyl-CoA biosynthetic process from acetate"/>
    <property type="evidence" value="ECO:0007669"/>
    <property type="project" value="InterPro"/>
</dbReference>
<dbReference type="CDD" id="cd05966">
    <property type="entry name" value="ACS"/>
    <property type="match status" value="1"/>
</dbReference>
<dbReference type="FunFam" id="3.40.50.12780:FF:000001">
    <property type="entry name" value="Acetyl-coenzyme A synthetase"/>
    <property type="match status" value="1"/>
</dbReference>
<dbReference type="Gene3D" id="3.30.300.30">
    <property type="match status" value="1"/>
</dbReference>
<dbReference type="Gene3D" id="3.40.50.12780">
    <property type="entry name" value="N-terminal domain of ligase-like"/>
    <property type="match status" value="1"/>
</dbReference>
<dbReference type="HAMAP" id="MF_01123">
    <property type="entry name" value="Ac_CoA_synth"/>
    <property type="match status" value="1"/>
</dbReference>
<dbReference type="InterPro" id="IPR011904">
    <property type="entry name" value="Ac_CoA_lig"/>
</dbReference>
<dbReference type="InterPro" id="IPR032387">
    <property type="entry name" value="ACAS_N"/>
</dbReference>
<dbReference type="InterPro" id="IPR025110">
    <property type="entry name" value="AMP-bd_C"/>
</dbReference>
<dbReference type="InterPro" id="IPR045851">
    <property type="entry name" value="AMP-bd_C_sf"/>
</dbReference>
<dbReference type="InterPro" id="IPR020845">
    <property type="entry name" value="AMP-binding_CS"/>
</dbReference>
<dbReference type="InterPro" id="IPR000873">
    <property type="entry name" value="AMP-dep_synth/lig_dom"/>
</dbReference>
<dbReference type="InterPro" id="IPR042099">
    <property type="entry name" value="ANL_N_sf"/>
</dbReference>
<dbReference type="NCBIfam" id="TIGR02188">
    <property type="entry name" value="Ac_CoA_lig_AcsA"/>
    <property type="match status" value="1"/>
</dbReference>
<dbReference type="NCBIfam" id="NF001208">
    <property type="entry name" value="PRK00174.1"/>
    <property type="match status" value="1"/>
</dbReference>
<dbReference type="PANTHER" id="PTHR24095">
    <property type="entry name" value="ACETYL-COENZYME A SYNTHETASE"/>
    <property type="match status" value="1"/>
</dbReference>
<dbReference type="PANTHER" id="PTHR24095:SF14">
    <property type="entry name" value="ACETYL-COENZYME A SYNTHETASE 1"/>
    <property type="match status" value="1"/>
</dbReference>
<dbReference type="Pfam" id="PF16177">
    <property type="entry name" value="ACAS_N"/>
    <property type="match status" value="1"/>
</dbReference>
<dbReference type="Pfam" id="PF00501">
    <property type="entry name" value="AMP-binding"/>
    <property type="match status" value="1"/>
</dbReference>
<dbReference type="Pfam" id="PF13193">
    <property type="entry name" value="AMP-binding_C"/>
    <property type="match status" value="1"/>
</dbReference>
<dbReference type="SUPFAM" id="SSF56801">
    <property type="entry name" value="Acetyl-CoA synthetase-like"/>
    <property type="match status" value="1"/>
</dbReference>
<dbReference type="PROSITE" id="PS00455">
    <property type="entry name" value="AMP_BINDING"/>
    <property type="match status" value="1"/>
</dbReference>
<organism>
    <name type="scientific">Burkholderia mallei (strain ATCC 23344)</name>
    <dbReference type="NCBI Taxonomy" id="243160"/>
    <lineage>
        <taxon>Bacteria</taxon>
        <taxon>Pseudomonadati</taxon>
        <taxon>Pseudomonadota</taxon>
        <taxon>Betaproteobacteria</taxon>
        <taxon>Burkholderiales</taxon>
        <taxon>Burkholderiaceae</taxon>
        <taxon>Burkholderia</taxon>
        <taxon>pseudomallei group</taxon>
    </lineage>
</organism>
<comment type="function">
    <text evidence="1">Catalyzes the conversion of acetate into acetyl-CoA (AcCoA), an essential intermediate at the junction of anabolic and catabolic pathways. AcsA undergoes a two-step reaction. In the first half reaction, AcsA combines acetate with ATP to form acetyl-adenylate (AcAMP) intermediate. In the second half reaction, it can then transfer the acetyl group from AcAMP to the sulfhydryl group of CoA, forming the product AcCoA.</text>
</comment>
<comment type="catalytic activity">
    <reaction evidence="1">
        <text>acetate + ATP + CoA = acetyl-CoA + AMP + diphosphate</text>
        <dbReference type="Rhea" id="RHEA:23176"/>
        <dbReference type="ChEBI" id="CHEBI:30089"/>
        <dbReference type="ChEBI" id="CHEBI:30616"/>
        <dbReference type="ChEBI" id="CHEBI:33019"/>
        <dbReference type="ChEBI" id="CHEBI:57287"/>
        <dbReference type="ChEBI" id="CHEBI:57288"/>
        <dbReference type="ChEBI" id="CHEBI:456215"/>
        <dbReference type="EC" id="6.2.1.1"/>
    </reaction>
</comment>
<comment type="cofactor">
    <cofactor evidence="1">
        <name>Mg(2+)</name>
        <dbReference type="ChEBI" id="CHEBI:18420"/>
    </cofactor>
</comment>
<comment type="PTM">
    <text evidence="1">Acetylated. Deacetylation by the SIR2-homolog deacetylase activates the enzyme.</text>
</comment>
<comment type="similarity">
    <text evidence="1">Belongs to the ATP-dependent AMP-binding enzyme family.</text>
</comment>
<gene>
    <name evidence="1" type="primary">acsA</name>
    <name type="ordered locus">BMAA1794</name>
</gene>
<accession>Q62AD1</accession>
<protein>
    <recommendedName>
        <fullName evidence="1">Acetyl-coenzyme A synthetase</fullName>
        <shortName evidence="1">AcCoA synthetase</shortName>
        <shortName evidence="1">Acs</shortName>
        <ecNumber evidence="1">6.2.1.1</ecNumber>
    </recommendedName>
    <alternativeName>
        <fullName evidence="1">Acetate--CoA ligase</fullName>
    </alternativeName>
    <alternativeName>
        <fullName evidence="1">Acyl-activating enzyme</fullName>
    </alternativeName>
</protein>
<keyword id="KW-0007">Acetylation</keyword>
<keyword id="KW-0067">ATP-binding</keyword>
<keyword id="KW-0436">Ligase</keyword>
<keyword id="KW-0460">Magnesium</keyword>
<keyword id="KW-0479">Metal-binding</keyword>
<keyword id="KW-0547">Nucleotide-binding</keyword>
<keyword id="KW-1185">Reference proteome</keyword>
<name>ACSA_BURMA</name>
<proteinExistence type="inferred from homology"/>
<reference key="1">
    <citation type="journal article" date="2004" name="Proc. Natl. Acad. Sci. U.S.A.">
        <title>Structural flexibility in the Burkholderia mallei genome.</title>
        <authorList>
            <person name="Nierman W.C."/>
            <person name="DeShazer D."/>
            <person name="Kim H.S."/>
            <person name="Tettelin H."/>
            <person name="Nelson K.E."/>
            <person name="Feldblyum T.V."/>
            <person name="Ulrich R.L."/>
            <person name="Ronning C.M."/>
            <person name="Brinkac L.M."/>
            <person name="Daugherty S.C."/>
            <person name="Davidsen T.D."/>
            <person name="DeBoy R.T."/>
            <person name="Dimitrov G."/>
            <person name="Dodson R.J."/>
            <person name="Durkin A.S."/>
            <person name="Gwinn M.L."/>
            <person name="Haft D.H."/>
            <person name="Khouri H.M."/>
            <person name="Kolonay J.F."/>
            <person name="Madupu R."/>
            <person name="Mohammoud Y."/>
            <person name="Nelson W.C."/>
            <person name="Radune D."/>
            <person name="Romero C.M."/>
            <person name="Sarria S."/>
            <person name="Selengut J."/>
            <person name="Shamblin C."/>
            <person name="Sullivan S.A."/>
            <person name="White O."/>
            <person name="Yu Y."/>
            <person name="Zafar N."/>
            <person name="Zhou L."/>
            <person name="Fraser C.M."/>
        </authorList>
    </citation>
    <scope>NUCLEOTIDE SEQUENCE [LARGE SCALE GENOMIC DNA]</scope>
    <source>
        <strain>ATCC 23344</strain>
    </source>
</reference>
<feature type="chain" id="PRO_1000065279" description="Acetyl-coenzyme A synthetase">
    <location>
        <begin position="1"/>
        <end position="660"/>
    </location>
</feature>
<feature type="binding site" evidence="1">
    <location>
        <begin position="197"/>
        <end position="200"/>
    </location>
    <ligand>
        <name>CoA</name>
        <dbReference type="ChEBI" id="CHEBI:57287"/>
    </ligand>
</feature>
<feature type="binding site" evidence="1">
    <location>
        <position position="317"/>
    </location>
    <ligand>
        <name>CoA</name>
        <dbReference type="ChEBI" id="CHEBI:57287"/>
    </ligand>
</feature>
<feature type="binding site" evidence="1">
    <location>
        <begin position="397"/>
        <end position="399"/>
    </location>
    <ligand>
        <name>ATP</name>
        <dbReference type="ChEBI" id="CHEBI:30616"/>
    </ligand>
</feature>
<feature type="binding site" evidence="1">
    <location>
        <begin position="421"/>
        <end position="426"/>
    </location>
    <ligand>
        <name>ATP</name>
        <dbReference type="ChEBI" id="CHEBI:30616"/>
    </ligand>
</feature>
<feature type="binding site" evidence="1">
    <location>
        <position position="512"/>
    </location>
    <ligand>
        <name>ATP</name>
        <dbReference type="ChEBI" id="CHEBI:30616"/>
    </ligand>
</feature>
<feature type="binding site" evidence="1">
    <location>
        <position position="528"/>
    </location>
    <ligand>
        <name>ATP</name>
        <dbReference type="ChEBI" id="CHEBI:30616"/>
    </ligand>
</feature>
<feature type="binding site" evidence="1">
    <location>
        <position position="536"/>
    </location>
    <ligand>
        <name>CoA</name>
        <dbReference type="ChEBI" id="CHEBI:57287"/>
    </ligand>
</feature>
<feature type="binding site" evidence="1">
    <location>
        <position position="539"/>
    </location>
    <ligand>
        <name>ATP</name>
        <dbReference type="ChEBI" id="CHEBI:30616"/>
    </ligand>
</feature>
<feature type="binding site" evidence="1">
    <location>
        <position position="550"/>
    </location>
    <ligand>
        <name>Mg(2+)</name>
        <dbReference type="ChEBI" id="CHEBI:18420"/>
    </ligand>
</feature>
<feature type="binding site" evidence="1">
    <location>
        <position position="552"/>
    </location>
    <ligand>
        <name>Mg(2+)</name>
        <dbReference type="ChEBI" id="CHEBI:18420"/>
    </ligand>
</feature>
<feature type="binding site" evidence="1">
    <location>
        <position position="555"/>
    </location>
    <ligand>
        <name>Mg(2+)</name>
        <dbReference type="ChEBI" id="CHEBI:18420"/>
    </ligand>
</feature>
<feature type="modified residue" description="N6-acetyllysine" evidence="1">
    <location>
        <position position="625"/>
    </location>
</feature>
<sequence>MSAIESVLHERRQFAPPAAVEKAAAISGMAAYRALAEEAERDYEGFWARLARETLEWRKPFGKVLDETNAPFYKWFEDGELNASYNCLDRHVAAGLGERVAVIFEADDGTVTRVTYADLLARVSRFANALKKRGVGRGDRVVIYIPMSVEGIVAMQACARIGATHSVVFGGFSSKSLHERIVDVGATALVTADEQMRGGKTLPLKSIADEALAMGGCDAVKTVVVYRRTGGNVDWHAGRDVWMHEMVANESDACEPEWVGAEHPLFILYTSGSTGKPKGVQHSTAGYLLWVAQTMKWTFDWKPDDVFWCTADIGWVTGHSYITYGPLAVGATQVVFEGVPTYPNAGRFWKMIGDHKVTVFYTAPTAIRSLIKAAEADDRVHPRSYDLSSLRIIGTVGEPINPEAWIWYHKNVGQARCPIVDTWWQTETGGHMITPLPGATPTVPGSCTLPLPGIMAAVVDETGQDVPNGQGGILVVKRPWPAMARTIWGDPERFKKSYFPEELGGRLYLAGDGTVRDKETGYFTIMGRIDDVLNVSGHRLGTMEIESALVSHELVAEAAVVGRPDDTTGEAVVAFVVLKRSRPEGEEAAALAKTLRDWVGKEIGPIAKPKDIRFGDNLPKTRSGKIMRRLLRSLAKGEAITQDTSTLENPAILEQLAEVR</sequence>